<evidence type="ECO:0000255" key="1">
    <source>
        <dbReference type="HAMAP-Rule" id="MF_01073"/>
    </source>
</evidence>
<comment type="function">
    <text evidence="1">Required for spatial organization of the terminus region of the chromosome (Ter macrodomain) during the cell cycle. Prevents early segregation of duplicated Ter macrodomains during cell division. Binds specifically to matS, which is a 13 bp signature motif repeated within the Ter macrodomain.</text>
</comment>
<comment type="subunit">
    <text evidence="1">Homodimer.</text>
</comment>
<comment type="subcellular location">
    <subcellularLocation>
        <location evidence="1">Cytoplasm</location>
    </subcellularLocation>
</comment>
<comment type="similarity">
    <text evidence="1">Belongs to the MatP family.</text>
</comment>
<gene>
    <name evidence="1" type="primary">matP</name>
    <name type="ordered locus">CKO_02112</name>
</gene>
<organism>
    <name type="scientific">Citrobacter koseri (strain ATCC BAA-895 / CDC 4225-83 / SGSC4696)</name>
    <dbReference type="NCBI Taxonomy" id="290338"/>
    <lineage>
        <taxon>Bacteria</taxon>
        <taxon>Pseudomonadati</taxon>
        <taxon>Pseudomonadota</taxon>
        <taxon>Gammaproteobacteria</taxon>
        <taxon>Enterobacterales</taxon>
        <taxon>Enterobacteriaceae</taxon>
        <taxon>Citrobacter</taxon>
    </lineage>
</organism>
<sequence length="150" mass="17745">MKYQQLENLESGWKWKYLVKKHREGELITRYVEASAAKEAVDLLLTLENEPVRVNAWIEEHMNPALLNRMKQTIRARRKRHFNAEHQHTRKKSIDLEFIVWQRLAGLAQRRGKTLSETIVQLIEDAEHKEKYASKMSTLKQDLQALLGKE</sequence>
<proteinExistence type="inferred from homology"/>
<name>MATP_CITK8</name>
<reference key="1">
    <citation type="submission" date="2007-08" db="EMBL/GenBank/DDBJ databases">
        <authorList>
            <consortium name="The Citrobacter koseri Genome Sequencing Project"/>
            <person name="McClelland M."/>
            <person name="Sanderson E.K."/>
            <person name="Porwollik S."/>
            <person name="Spieth J."/>
            <person name="Clifton W.S."/>
            <person name="Latreille P."/>
            <person name="Courtney L."/>
            <person name="Wang C."/>
            <person name="Pepin K."/>
            <person name="Bhonagiri V."/>
            <person name="Nash W."/>
            <person name="Johnson M."/>
            <person name="Thiruvilangam P."/>
            <person name="Wilson R."/>
        </authorList>
    </citation>
    <scope>NUCLEOTIDE SEQUENCE [LARGE SCALE GENOMIC DNA]</scope>
    <source>
        <strain>ATCC BAA-895 / CDC 4225-83 / SGSC4696</strain>
    </source>
</reference>
<protein>
    <recommendedName>
        <fullName evidence="1">Macrodomain Ter protein</fullName>
    </recommendedName>
</protein>
<feature type="chain" id="PRO_1000064622" description="Macrodomain Ter protein">
    <location>
        <begin position="1"/>
        <end position="150"/>
    </location>
</feature>
<accession>A8AIC3</accession>
<dbReference type="EMBL" id="CP000822">
    <property type="protein sequence ID" value="ABV13236.1"/>
    <property type="molecule type" value="Genomic_DNA"/>
</dbReference>
<dbReference type="RefSeq" id="WP_012132968.1">
    <property type="nucleotide sequence ID" value="NC_009792.1"/>
</dbReference>
<dbReference type="SMR" id="A8AIC3"/>
<dbReference type="STRING" id="290338.CKO_02112"/>
<dbReference type="GeneID" id="45136059"/>
<dbReference type="KEGG" id="cko:CKO_02112"/>
<dbReference type="HOGENOM" id="CLU_142157_0_0_6"/>
<dbReference type="OrthoDB" id="5814691at2"/>
<dbReference type="Proteomes" id="UP000008148">
    <property type="component" value="Chromosome"/>
</dbReference>
<dbReference type="GO" id="GO:0005737">
    <property type="term" value="C:cytoplasm"/>
    <property type="evidence" value="ECO:0007669"/>
    <property type="project" value="UniProtKB-SubCell"/>
</dbReference>
<dbReference type="GO" id="GO:0043565">
    <property type="term" value="F:sequence-specific DNA binding"/>
    <property type="evidence" value="ECO:0007669"/>
    <property type="project" value="UniProtKB-UniRule"/>
</dbReference>
<dbReference type="GO" id="GO:0051301">
    <property type="term" value="P:cell division"/>
    <property type="evidence" value="ECO:0007669"/>
    <property type="project" value="UniProtKB-UniRule"/>
</dbReference>
<dbReference type="GO" id="GO:0006355">
    <property type="term" value="P:regulation of DNA-templated transcription"/>
    <property type="evidence" value="ECO:0007669"/>
    <property type="project" value="InterPro"/>
</dbReference>
<dbReference type="Gene3D" id="1.20.1270.380">
    <property type="entry name" value="MatP, N-terminal domain"/>
    <property type="match status" value="1"/>
</dbReference>
<dbReference type="Gene3D" id="1.10.1220.10">
    <property type="entry name" value="Met repressor-like"/>
    <property type="match status" value="1"/>
</dbReference>
<dbReference type="HAMAP" id="MF_01073">
    <property type="entry name" value="MatP"/>
    <property type="match status" value="1"/>
</dbReference>
<dbReference type="InterPro" id="IPR013321">
    <property type="entry name" value="Arc_rbn_hlx_hlx"/>
</dbReference>
<dbReference type="InterPro" id="IPR009390">
    <property type="entry name" value="MatP"/>
</dbReference>
<dbReference type="InterPro" id="IPR035375">
    <property type="entry name" value="MatP_C"/>
</dbReference>
<dbReference type="InterPro" id="IPR035087">
    <property type="entry name" value="MatP_N"/>
</dbReference>
<dbReference type="InterPro" id="IPR038339">
    <property type="entry name" value="MatP_N_sf"/>
</dbReference>
<dbReference type="NCBIfam" id="NF003471">
    <property type="entry name" value="PRK05097.1"/>
    <property type="match status" value="1"/>
</dbReference>
<dbReference type="Pfam" id="PF06303">
    <property type="entry name" value="MatP"/>
    <property type="match status" value="1"/>
</dbReference>
<dbReference type="Pfam" id="PF17414">
    <property type="entry name" value="MatP_C"/>
    <property type="match status" value="1"/>
</dbReference>
<keyword id="KW-0131">Cell cycle</keyword>
<keyword id="KW-0132">Cell division</keyword>
<keyword id="KW-0963">Cytoplasm</keyword>
<keyword id="KW-0238">DNA-binding</keyword>
<keyword id="KW-1185">Reference proteome</keyword>